<keyword id="KW-0002">3D-structure</keyword>
<keyword id="KW-0687">Ribonucleoprotein</keyword>
<keyword id="KW-0689">Ribosomal protein</keyword>
<keyword id="KW-0694">RNA-binding</keyword>
<keyword id="KW-0699">rRNA-binding</keyword>
<sequence length="117" mass="12835">MEAKAVARTIRIAPRKVRLVLDLIRGKNAAEAIAILKLTNKASSPVIEKVLMSALANAEHNYDMNTDELVVKEAYANEGPTLKRFRPRAQGRASAINKRTSHITIVVSDGKEEAKEA</sequence>
<dbReference type="EMBL" id="AJ938182">
    <property type="protein sequence ID" value="CAI81806.1"/>
    <property type="molecule type" value="Genomic_DNA"/>
</dbReference>
<dbReference type="RefSeq" id="WP_000387527.1">
    <property type="nucleotide sequence ID" value="NC_007622.1"/>
</dbReference>
<dbReference type="PDB" id="6FXC">
    <property type="method" value="EM"/>
    <property type="resolution" value="6.76 A"/>
    <property type="chains" value="AQ/BQ=1-112"/>
</dbReference>
<dbReference type="PDBsum" id="6FXC"/>
<dbReference type="EMDB" id="EMD-0243"/>
<dbReference type="EMDB" id="EMD-3637"/>
<dbReference type="SMR" id="Q2YYQ1"/>
<dbReference type="GeneID" id="98346557"/>
<dbReference type="KEGG" id="sab:SAB2117c"/>
<dbReference type="HOGENOM" id="CLU_083987_3_3_9"/>
<dbReference type="GO" id="GO:0022625">
    <property type="term" value="C:cytosolic large ribosomal subunit"/>
    <property type="evidence" value="ECO:0007669"/>
    <property type="project" value="TreeGrafter"/>
</dbReference>
<dbReference type="GO" id="GO:0019843">
    <property type="term" value="F:rRNA binding"/>
    <property type="evidence" value="ECO:0007669"/>
    <property type="project" value="UniProtKB-UniRule"/>
</dbReference>
<dbReference type="GO" id="GO:0003735">
    <property type="term" value="F:structural constituent of ribosome"/>
    <property type="evidence" value="ECO:0007669"/>
    <property type="project" value="InterPro"/>
</dbReference>
<dbReference type="GO" id="GO:0006412">
    <property type="term" value="P:translation"/>
    <property type="evidence" value="ECO:0007669"/>
    <property type="project" value="UniProtKB-UniRule"/>
</dbReference>
<dbReference type="CDD" id="cd00336">
    <property type="entry name" value="Ribosomal_L22"/>
    <property type="match status" value="1"/>
</dbReference>
<dbReference type="FunFam" id="3.90.470.10:FF:000001">
    <property type="entry name" value="50S ribosomal protein L22"/>
    <property type="match status" value="1"/>
</dbReference>
<dbReference type="Gene3D" id="3.90.470.10">
    <property type="entry name" value="Ribosomal protein L22/L17"/>
    <property type="match status" value="1"/>
</dbReference>
<dbReference type="HAMAP" id="MF_01331_B">
    <property type="entry name" value="Ribosomal_uL22_B"/>
    <property type="match status" value="1"/>
</dbReference>
<dbReference type="InterPro" id="IPR001063">
    <property type="entry name" value="Ribosomal_uL22"/>
</dbReference>
<dbReference type="InterPro" id="IPR005727">
    <property type="entry name" value="Ribosomal_uL22_bac/chlpt-type"/>
</dbReference>
<dbReference type="InterPro" id="IPR047867">
    <property type="entry name" value="Ribosomal_uL22_bac/org-type"/>
</dbReference>
<dbReference type="InterPro" id="IPR018260">
    <property type="entry name" value="Ribosomal_uL22_CS"/>
</dbReference>
<dbReference type="InterPro" id="IPR036394">
    <property type="entry name" value="Ribosomal_uL22_sf"/>
</dbReference>
<dbReference type="NCBIfam" id="TIGR01044">
    <property type="entry name" value="rplV_bact"/>
    <property type="match status" value="1"/>
</dbReference>
<dbReference type="PANTHER" id="PTHR13501">
    <property type="entry name" value="CHLOROPLAST 50S RIBOSOMAL PROTEIN L22-RELATED"/>
    <property type="match status" value="1"/>
</dbReference>
<dbReference type="PANTHER" id="PTHR13501:SF8">
    <property type="entry name" value="LARGE RIBOSOMAL SUBUNIT PROTEIN UL22M"/>
    <property type="match status" value="1"/>
</dbReference>
<dbReference type="Pfam" id="PF00237">
    <property type="entry name" value="Ribosomal_L22"/>
    <property type="match status" value="1"/>
</dbReference>
<dbReference type="SUPFAM" id="SSF54843">
    <property type="entry name" value="Ribosomal protein L22"/>
    <property type="match status" value="1"/>
</dbReference>
<dbReference type="PROSITE" id="PS00464">
    <property type="entry name" value="RIBOSOMAL_L22"/>
    <property type="match status" value="1"/>
</dbReference>
<proteinExistence type="evidence at protein level"/>
<reference key="1">
    <citation type="journal article" date="2007" name="PLoS ONE">
        <title>Molecular correlates of host specialization in Staphylococcus aureus.</title>
        <authorList>
            <person name="Herron-Olson L."/>
            <person name="Fitzgerald J.R."/>
            <person name="Musser J.M."/>
            <person name="Kapur V."/>
        </authorList>
    </citation>
    <scope>NUCLEOTIDE SEQUENCE [LARGE SCALE GENOMIC DNA]</scope>
    <source>
        <strain>bovine RF122 / ET3-1</strain>
    </source>
</reference>
<protein>
    <recommendedName>
        <fullName evidence="1">Large ribosomal subunit protein uL22</fullName>
    </recommendedName>
    <alternativeName>
        <fullName evidence="2">50S ribosomal protein L22</fullName>
    </alternativeName>
</protein>
<evidence type="ECO:0000255" key="1">
    <source>
        <dbReference type="HAMAP-Rule" id="MF_01331"/>
    </source>
</evidence>
<evidence type="ECO:0000305" key="2"/>
<comment type="function">
    <text evidence="1">This protein binds specifically to 23S rRNA; its binding is stimulated by other ribosomal proteins, e.g. L4, L17, and L20. It is important during the early stages of 50S assembly. It makes multiple contacts with different domains of the 23S rRNA in the assembled 50S subunit and ribosome (By similarity).</text>
</comment>
<comment type="function">
    <text evidence="1">The globular domain of the protein is located near the polypeptide exit tunnel on the outside of the subunit, while an extended beta-hairpin is found that lines the wall of the exit tunnel in the center of the 70S ribosome.</text>
</comment>
<comment type="subunit">
    <text evidence="1">Part of the 50S ribosomal subunit.</text>
</comment>
<comment type="similarity">
    <text evidence="1">Belongs to the universal ribosomal protein uL22 family.</text>
</comment>
<feature type="chain" id="PRO_0000243209" description="Large ribosomal subunit protein uL22">
    <location>
        <begin position="1"/>
        <end position="117"/>
    </location>
</feature>
<accession>Q2YYQ1</accession>
<organism>
    <name type="scientific">Staphylococcus aureus (strain bovine RF122 / ET3-1)</name>
    <dbReference type="NCBI Taxonomy" id="273036"/>
    <lineage>
        <taxon>Bacteria</taxon>
        <taxon>Bacillati</taxon>
        <taxon>Bacillota</taxon>
        <taxon>Bacilli</taxon>
        <taxon>Bacillales</taxon>
        <taxon>Staphylococcaceae</taxon>
        <taxon>Staphylococcus</taxon>
    </lineage>
</organism>
<gene>
    <name evidence="1" type="primary">rplV</name>
    <name type="ordered locus">SAB2117c</name>
</gene>
<name>RL22_STAAB</name>